<proteinExistence type="evidence at protein level"/>
<keyword id="KW-0002">3D-structure</keyword>
<keyword id="KW-0963">Cytoplasm</keyword>
<keyword id="KW-0342">GTP-binding</keyword>
<keyword id="KW-0378">Hydrolase</keyword>
<keyword id="KW-0460">Magnesium</keyword>
<keyword id="KW-0479">Metal-binding</keyword>
<keyword id="KW-0547">Nucleotide-binding</keyword>
<keyword id="KW-0630">Potassium</keyword>
<keyword id="KW-1185">Reference proteome</keyword>
<keyword id="KW-0819">tRNA processing</keyword>
<gene>
    <name evidence="1" type="primary">mnmE</name>
    <name evidence="1" type="synonym">thdF</name>
    <name evidence="1" type="synonym">trmE</name>
    <name type="ordered locus">CT2084</name>
</gene>
<feature type="chain" id="PRO_0000188866" description="tRNA modification GTPase MnmE">
    <location>
        <begin position="1"/>
        <end position="473"/>
    </location>
</feature>
<feature type="domain" description="TrmE-type G">
    <location>
        <begin position="230"/>
        <end position="394"/>
    </location>
</feature>
<feature type="binding site" evidence="1">
    <location>
        <position position="31"/>
    </location>
    <ligand>
        <name>(6S)-5-formyl-5,6,7,8-tetrahydrofolate</name>
        <dbReference type="ChEBI" id="CHEBI:57457"/>
    </ligand>
</feature>
<feature type="binding site" evidence="1">
    <location>
        <position position="95"/>
    </location>
    <ligand>
        <name>(6S)-5-formyl-5,6,7,8-tetrahydrofolate</name>
        <dbReference type="ChEBI" id="CHEBI:57457"/>
    </ligand>
</feature>
<feature type="binding site" evidence="1">
    <location>
        <position position="134"/>
    </location>
    <ligand>
        <name>(6S)-5-formyl-5,6,7,8-tetrahydrofolate</name>
        <dbReference type="ChEBI" id="CHEBI:57457"/>
    </ligand>
</feature>
<feature type="binding site" evidence="1">
    <location>
        <begin position="240"/>
        <end position="245"/>
    </location>
    <ligand>
        <name>GTP</name>
        <dbReference type="ChEBI" id="CHEBI:37565"/>
    </ligand>
</feature>
<feature type="binding site" evidence="1">
    <location>
        <position position="244"/>
    </location>
    <ligand>
        <name>Mg(2+)</name>
        <dbReference type="ChEBI" id="CHEBI:18420"/>
    </ligand>
</feature>
<feature type="binding site" evidence="1">
    <location>
        <begin position="259"/>
        <end position="265"/>
    </location>
    <ligand>
        <name>GTP</name>
        <dbReference type="ChEBI" id="CHEBI:37565"/>
    </ligand>
</feature>
<feature type="binding site" evidence="1">
    <location>
        <position position="265"/>
    </location>
    <ligand>
        <name>Mg(2+)</name>
        <dbReference type="ChEBI" id="CHEBI:18420"/>
    </ligand>
</feature>
<feature type="binding site" evidence="1">
    <location>
        <begin position="284"/>
        <end position="287"/>
    </location>
    <ligand>
        <name>GTP</name>
        <dbReference type="ChEBI" id="CHEBI:37565"/>
    </ligand>
</feature>
<feature type="binding site" evidence="1">
    <location>
        <position position="473"/>
    </location>
    <ligand>
        <name>(6S)-5-formyl-5,6,7,8-tetrahydrofolate</name>
        <dbReference type="ChEBI" id="CHEBI:57457"/>
    </ligand>
</feature>
<feature type="strand" evidence="2">
    <location>
        <begin position="15"/>
        <end position="18"/>
    </location>
</feature>
<feature type="strand" evidence="2">
    <location>
        <begin position="26"/>
        <end position="34"/>
    </location>
</feature>
<feature type="helix" evidence="2">
    <location>
        <begin position="37"/>
        <end position="44"/>
    </location>
</feature>
<feature type="strand" evidence="2">
    <location>
        <begin position="45"/>
        <end position="50"/>
    </location>
</feature>
<feature type="helix" evidence="2">
    <location>
        <begin position="54"/>
        <end position="56"/>
    </location>
</feature>
<feature type="strand" evidence="2">
    <location>
        <begin position="61"/>
        <end position="71"/>
    </location>
</feature>
<feature type="strand" evidence="2">
    <location>
        <begin position="73"/>
        <end position="83"/>
    </location>
</feature>
<feature type="strand" evidence="2">
    <location>
        <begin position="86"/>
        <end position="91"/>
    </location>
</feature>
<feature type="strand" evidence="2">
    <location>
        <begin position="93"/>
        <end position="99"/>
    </location>
</feature>
<feature type="helix" evidence="2">
    <location>
        <begin position="102"/>
        <end position="114"/>
    </location>
</feature>
<feature type="helix" evidence="2">
    <location>
        <begin position="124"/>
        <end position="131"/>
    </location>
</feature>
<feature type="helix" evidence="2">
    <location>
        <begin position="137"/>
        <end position="148"/>
    </location>
</feature>
<feature type="helix" evidence="2">
    <location>
        <begin position="152"/>
        <end position="163"/>
    </location>
</feature>
<feature type="helix" evidence="2">
    <location>
        <begin position="165"/>
        <end position="174"/>
    </location>
</feature>
<feature type="helix" evidence="2">
    <location>
        <begin position="176"/>
        <end position="182"/>
    </location>
</feature>
<feature type="turn" evidence="2">
    <location>
        <begin position="183"/>
        <end position="186"/>
    </location>
</feature>
<feature type="strand" evidence="2">
    <location>
        <begin position="196"/>
        <end position="198"/>
    </location>
</feature>
<feature type="helix" evidence="2">
    <location>
        <begin position="200"/>
        <end position="229"/>
    </location>
</feature>
<feature type="strand" evidence="2">
    <location>
        <begin position="231"/>
        <end position="236"/>
    </location>
</feature>
<feature type="helix" evidence="2">
    <location>
        <begin position="243"/>
        <end position="249"/>
    </location>
</feature>
<feature type="strand" evidence="2">
    <location>
        <begin position="271"/>
        <end position="275"/>
    </location>
</feature>
<feature type="strand" evidence="2">
    <location>
        <begin position="278"/>
        <end position="283"/>
    </location>
</feature>
<feature type="strand" evidence="2">
    <location>
        <begin position="311"/>
        <end position="318"/>
    </location>
</feature>
<feature type="turn" evidence="2">
    <location>
        <begin position="319"/>
        <end position="321"/>
    </location>
</feature>
<feature type="strand" evidence="3">
    <location>
        <begin position="322"/>
        <end position="324"/>
    </location>
</feature>
<feature type="helix" evidence="2">
    <location>
        <begin position="325"/>
        <end position="327"/>
    </location>
</feature>
<feature type="helix" evidence="2">
    <location>
        <begin position="328"/>
        <end position="337"/>
    </location>
</feature>
<feature type="strand" evidence="2">
    <location>
        <begin position="341"/>
        <end position="348"/>
    </location>
</feature>
<feature type="turn" evidence="3">
    <location>
        <begin position="350"/>
        <end position="352"/>
    </location>
</feature>
<feature type="turn" evidence="2">
    <location>
        <begin position="354"/>
        <end position="356"/>
    </location>
</feature>
<feature type="helix" evidence="2">
    <location>
        <begin position="357"/>
        <end position="367"/>
    </location>
</feature>
<feature type="strand" evidence="2">
    <location>
        <begin position="371"/>
        <end position="373"/>
    </location>
</feature>
<feature type="turn" evidence="2">
    <location>
        <begin position="376"/>
        <end position="379"/>
    </location>
</feature>
<feature type="helix" evidence="2">
    <location>
        <begin position="382"/>
        <end position="389"/>
    </location>
</feature>
<feature type="helix" evidence="2">
    <location>
        <begin position="391"/>
        <end position="394"/>
    </location>
</feature>
<feature type="helix" evidence="2">
    <location>
        <begin position="409"/>
        <end position="426"/>
    </location>
</feature>
<feature type="turn" evidence="2">
    <location>
        <begin position="427"/>
        <end position="432"/>
    </location>
</feature>
<feature type="strand" evidence="2">
    <location>
        <begin position="435"/>
        <end position="437"/>
    </location>
</feature>
<feature type="helix" evidence="2">
    <location>
        <begin position="438"/>
        <end position="453"/>
    </location>
</feature>
<feature type="helix" evidence="2">
    <location>
        <begin position="461"/>
        <end position="466"/>
    </location>
</feature>
<name>MNME_CHLTE</name>
<organism>
    <name type="scientific">Chlorobaculum tepidum (strain ATCC 49652 / DSM 12025 / NBRC 103806 / TLS)</name>
    <name type="common">Chlorobium tepidum</name>
    <dbReference type="NCBI Taxonomy" id="194439"/>
    <lineage>
        <taxon>Bacteria</taxon>
        <taxon>Pseudomonadati</taxon>
        <taxon>Chlorobiota</taxon>
        <taxon>Chlorobiia</taxon>
        <taxon>Chlorobiales</taxon>
        <taxon>Chlorobiaceae</taxon>
        <taxon>Chlorobaculum</taxon>
    </lineage>
</organism>
<reference key="1">
    <citation type="journal article" date="2002" name="Proc. Natl. Acad. Sci. U.S.A.">
        <title>The complete genome sequence of Chlorobium tepidum TLS, a photosynthetic, anaerobic, green-sulfur bacterium.</title>
        <authorList>
            <person name="Eisen J.A."/>
            <person name="Nelson K.E."/>
            <person name="Paulsen I.T."/>
            <person name="Heidelberg J.F."/>
            <person name="Wu M."/>
            <person name="Dodson R.J."/>
            <person name="DeBoy R.T."/>
            <person name="Gwinn M.L."/>
            <person name="Nelson W.C."/>
            <person name="Haft D.H."/>
            <person name="Hickey E.K."/>
            <person name="Peterson J.D."/>
            <person name="Durkin A.S."/>
            <person name="Kolonay J.F."/>
            <person name="Yang F."/>
            <person name="Holt I.E."/>
            <person name="Umayam L.A."/>
            <person name="Mason T.M."/>
            <person name="Brenner M."/>
            <person name="Shea T.P."/>
            <person name="Parksey D.S."/>
            <person name="Nierman W.C."/>
            <person name="Feldblyum T.V."/>
            <person name="Hansen C.L."/>
            <person name="Craven M.B."/>
            <person name="Radune D."/>
            <person name="Vamathevan J.J."/>
            <person name="Khouri H.M."/>
            <person name="White O."/>
            <person name="Gruber T.M."/>
            <person name="Ketchum K.A."/>
            <person name="Venter J.C."/>
            <person name="Tettelin H."/>
            <person name="Bryant D.A."/>
            <person name="Fraser C.M."/>
        </authorList>
    </citation>
    <scope>NUCLEOTIDE SEQUENCE [LARGE SCALE GENOMIC DNA]</scope>
    <source>
        <strain>ATCC 49652 / DSM 12025 / NBRC 103806 / TLS</strain>
    </source>
</reference>
<dbReference type="EC" id="3.6.-.-" evidence="1"/>
<dbReference type="EMBL" id="AE006470">
    <property type="protein sequence ID" value="AAM73301.1"/>
    <property type="molecule type" value="Genomic_DNA"/>
</dbReference>
<dbReference type="RefSeq" id="NP_662959.1">
    <property type="nucleotide sequence ID" value="NC_002932.3"/>
</dbReference>
<dbReference type="RefSeq" id="WP_010933739.1">
    <property type="nucleotide sequence ID" value="NC_002932.3"/>
</dbReference>
<dbReference type="PDB" id="3GEE">
    <property type="method" value="X-ray"/>
    <property type="resolution" value="2.95 A"/>
    <property type="chains" value="A=1-473"/>
</dbReference>
<dbReference type="PDB" id="3GEI">
    <property type="method" value="X-ray"/>
    <property type="resolution" value="3.40 A"/>
    <property type="chains" value="A/B/C=1-473"/>
</dbReference>
<dbReference type="PDBsum" id="3GEE"/>
<dbReference type="PDBsum" id="3GEI"/>
<dbReference type="SMR" id="Q8KAS1"/>
<dbReference type="DIP" id="DIP-48420N"/>
<dbReference type="STRING" id="194439.CT2084"/>
<dbReference type="EnsemblBacteria" id="AAM73301">
    <property type="protein sequence ID" value="AAM73301"/>
    <property type="gene ID" value="CT2084"/>
</dbReference>
<dbReference type="KEGG" id="cte:CT2084"/>
<dbReference type="PATRIC" id="fig|194439.7.peg.1887"/>
<dbReference type="eggNOG" id="COG0486">
    <property type="taxonomic scope" value="Bacteria"/>
</dbReference>
<dbReference type="HOGENOM" id="CLU_019624_4_1_10"/>
<dbReference type="OrthoDB" id="9805918at2"/>
<dbReference type="EvolutionaryTrace" id="Q8KAS1"/>
<dbReference type="Proteomes" id="UP000001007">
    <property type="component" value="Chromosome"/>
</dbReference>
<dbReference type="GO" id="GO:0005829">
    <property type="term" value="C:cytosol"/>
    <property type="evidence" value="ECO:0007669"/>
    <property type="project" value="TreeGrafter"/>
</dbReference>
<dbReference type="GO" id="GO:0005525">
    <property type="term" value="F:GTP binding"/>
    <property type="evidence" value="ECO:0007669"/>
    <property type="project" value="UniProtKB-UniRule"/>
</dbReference>
<dbReference type="GO" id="GO:0003924">
    <property type="term" value="F:GTPase activity"/>
    <property type="evidence" value="ECO:0007669"/>
    <property type="project" value="UniProtKB-UniRule"/>
</dbReference>
<dbReference type="GO" id="GO:0042802">
    <property type="term" value="F:identical protein binding"/>
    <property type="evidence" value="ECO:0000353"/>
    <property type="project" value="IntAct"/>
</dbReference>
<dbReference type="GO" id="GO:0046872">
    <property type="term" value="F:metal ion binding"/>
    <property type="evidence" value="ECO:0007669"/>
    <property type="project" value="UniProtKB-KW"/>
</dbReference>
<dbReference type="GO" id="GO:0030488">
    <property type="term" value="P:tRNA methylation"/>
    <property type="evidence" value="ECO:0007669"/>
    <property type="project" value="TreeGrafter"/>
</dbReference>
<dbReference type="GO" id="GO:0002098">
    <property type="term" value="P:tRNA wobble uridine modification"/>
    <property type="evidence" value="ECO:0007669"/>
    <property type="project" value="TreeGrafter"/>
</dbReference>
<dbReference type="CDD" id="cd04164">
    <property type="entry name" value="trmE"/>
    <property type="match status" value="1"/>
</dbReference>
<dbReference type="CDD" id="cd14858">
    <property type="entry name" value="TrmE_N"/>
    <property type="match status" value="1"/>
</dbReference>
<dbReference type="FunFam" id="3.30.1360.120:FF:000003">
    <property type="entry name" value="tRNA modification GTPase MnmE"/>
    <property type="match status" value="1"/>
</dbReference>
<dbReference type="FunFam" id="3.40.50.300:FF:006180">
    <property type="entry name" value="tRNA modification GTPase MnmE"/>
    <property type="match status" value="1"/>
</dbReference>
<dbReference type="Gene3D" id="3.40.50.300">
    <property type="entry name" value="P-loop containing nucleotide triphosphate hydrolases"/>
    <property type="match status" value="1"/>
</dbReference>
<dbReference type="Gene3D" id="3.30.1360.120">
    <property type="entry name" value="Probable tRNA modification gtpase trme, domain 1"/>
    <property type="match status" value="1"/>
</dbReference>
<dbReference type="Gene3D" id="1.20.120.430">
    <property type="entry name" value="tRNA modification GTPase MnmE domain 2"/>
    <property type="match status" value="1"/>
</dbReference>
<dbReference type="HAMAP" id="MF_00379">
    <property type="entry name" value="GTPase_MnmE"/>
    <property type="match status" value="1"/>
</dbReference>
<dbReference type="InterPro" id="IPR031168">
    <property type="entry name" value="G_TrmE"/>
</dbReference>
<dbReference type="InterPro" id="IPR006073">
    <property type="entry name" value="GTP-bd"/>
</dbReference>
<dbReference type="InterPro" id="IPR018948">
    <property type="entry name" value="GTP-bd_TrmE_N"/>
</dbReference>
<dbReference type="InterPro" id="IPR004520">
    <property type="entry name" value="GTPase_MnmE"/>
</dbReference>
<dbReference type="InterPro" id="IPR027368">
    <property type="entry name" value="MnmE_dom2"/>
</dbReference>
<dbReference type="InterPro" id="IPR025867">
    <property type="entry name" value="MnmE_helical"/>
</dbReference>
<dbReference type="InterPro" id="IPR027417">
    <property type="entry name" value="P-loop_NTPase"/>
</dbReference>
<dbReference type="InterPro" id="IPR005225">
    <property type="entry name" value="Small_GTP-bd"/>
</dbReference>
<dbReference type="InterPro" id="IPR027266">
    <property type="entry name" value="TrmE/GcvT_dom1"/>
</dbReference>
<dbReference type="NCBIfam" id="TIGR00450">
    <property type="entry name" value="mnmE_trmE_thdF"/>
    <property type="match status" value="1"/>
</dbReference>
<dbReference type="NCBIfam" id="TIGR00231">
    <property type="entry name" value="small_GTP"/>
    <property type="match status" value="1"/>
</dbReference>
<dbReference type="PANTHER" id="PTHR42714">
    <property type="entry name" value="TRNA MODIFICATION GTPASE GTPBP3"/>
    <property type="match status" value="1"/>
</dbReference>
<dbReference type="PANTHER" id="PTHR42714:SF2">
    <property type="entry name" value="TRNA MODIFICATION GTPASE GTPBP3, MITOCHONDRIAL"/>
    <property type="match status" value="1"/>
</dbReference>
<dbReference type="Pfam" id="PF01926">
    <property type="entry name" value="MMR_HSR1"/>
    <property type="match status" value="1"/>
</dbReference>
<dbReference type="Pfam" id="PF12631">
    <property type="entry name" value="MnmE_helical"/>
    <property type="match status" value="1"/>
</dbReference>
<dbReference type="Pfam" id="PF10396">
    <property type="entry name" value="TrmE_N"/>
    <property type="match status" value="1"/>
</dbReference>
<dbReference type="SUPFAM" id="SSF52540">
    <property type="entry name" value="P-loop containing nucleoside triphosphate hydrolases"/>
    <property type="match status" value="1"/>
</dbReference>
<dbReference type="SUPFAM" id="SSF116878">
    <property type="entry name" value="TrmE connector domain"/>
    <property type="match status" value="1"/>
</dbReference>
<dbReference type="PROSITE" id="PS51709">
    <property type="entry name" value="G_TRME"/>
    <property type="match status" value="1"/>
</dbReference>
<protein>
    <recommendedName>
        <fullName evidence="1">tRNA modification GTPase MnmE</fullName>
        <ecNumber evidence="1">3.6.-.-</ecNumber>
    </recommendedName>
</protein>
<sequence length="473" mass="51817">MSPSDLHLPVPGHPIAAIATPVGVGALAIVRISGAGVLDLADRVFRKVHGSGKLAEAAGYTAHFGRLYDGEEMVDEVIALVFRAPRSFTAEQMVEFTCHGGPVVVGRVLRLMLDNGCRLAEPGEFTRRAFLNGRIDLLQAEAIGEMIHARTESAYRTAVSQMKGDLSVRLGGLREQLIRSCALIELELDFSEEDVEFQSRDELTMQIETLRSEVNRLIDSYQHGRIVSEGVSTVIAGKPNAGKSTLLNTLLGQERAIVSHMPGTTRDYIEECFIHDKTMFRLTDTAGLREAGEEIEHEGIRRSRMKMAEADLILYLLDLGTERLDDELTEIRELKAAHPAAKFLTVANKLDRAANADALIRAIADGTGTEVIGISALNGDGIDTLKQHMGDLVKNLDKLHEASVLVTSLRHYEALRNASDALQNALELIAHESETELIAFELRAALDYVGQITGKVVNEEVLNTIFDKFCIGK</sequence>
<evidence type="ECO:0000255" key="1">
    <source>
        <dbReference type="HAMAP-Rule" id="MF_00379"/>
    </source>
</evidence>
<evidence type="ECO:0007829" key="2">
    <source>
        <dbReference type="PDB" id="3GEE"/>
    </source>
</evidence>
<evidence type="ECO:0007829" key="3">
    <source>
        <dbReference type="PDB" id="3GEI"/>
    </source>
</evidence>
<accession>Q8KAS1</accession>
<comment type="function">
    <text evidence="1">Exhibits a very high intrinsic GTPase hydrolysis rate. Involved in the addition of a carboxymethylaminomethyl (cmnm) group at the wobble position (U34) of certain tRNAs, forming tRNA-cmnm(5)s(2)U34.</text>
</comment>
<comment type="cofactor">
    <cofactor evidence="1">
        <name>K(+)</name>
        <dbReference type="ChEBI" id="CHEBI:29103"/>
    </cofactor>
    <text evidence="1">Binds 1 potassium ion per subunit.</text>
</comment>
<comment type="subunit">
    <text evidence="1">Homodimer. Heterotetramer of two MnmE and two MnmG subunits.</text>
</comment>
<comment type="interaction">
    <interactant intactId="EBI-15807975">
        <id>Q8KAS1</id>
    </interactant>
    <interactant intactId="EBI-15807975">
        <id>Q8KAS1</id>
        <label>mnmE</label>
    </interactant>
    <organismsDiffer>false</organismsDiffer>
    <experiments>2</experiments>
</comment>
<comment type="subcellular location">
    <subcellularLocation>
        <location evidence="1">Cytoplasm</location>
    </subcellularLocation>
</comment>
<comment type="similarity">
    <text evidence="1">Belongs to the TRAFAC class TrmE-Era-EngA-EngB-Septin-like GTPase superfamily. TrmE GTPase family.</text>
</comment>